<proteinExistence type="inferred from homology"/>
<feature type="chain" id="PRO_1000058655" description="Divalent metal cation transporter MntH">
    <location>
        <begin position="1"/>
        <end position="412"/>
    </location>
</feature>
<feature type="topological domain" description="Cytoplasmic" evidence="1">
    <location>
        <begin position="1"/>
        <end position="19"/>
    </location>
</feature>
<feature type="transmembrane region" description="Helical" evidence="1">
    <location>
        <begin position="20"/>
        <end position="39"/>
    </location>
</feature>
<feature type="topological domain" description="Periplasmic" evidence="1">
    <location>
        <begin position="40"/>
        <end position="51"/>
    </location>
</feature>
<feature type="transmembrane region" description="Helical" evidence="1">
    <location>
        <begin position="52"/>
        <end position="71"/>
    </location>
</feature>
<feature type="topological domain" description="Cytoplasmic" evidence="1">
    <location>
        <begin position="72"/>
        <end position="95"/>
    </location>
</feature>
<feature type="transmembrane region" description="Helical" evidence="1">
    <location>
        <begin position="96"/>
        <end position="118"/>
    </location>
</feature>
<feature type="topological domain" description="Periplasmic" evidence="1">
    <location>
        <begin position="119"/>
        <end position="125"/>
    </location>
</feature>
<feature type="transmembrane region" description="Helical" evidence="1">
    <location>
        <begin position="126"/>
        <end position="145"/>
    </location>
</feature>
<feature type="topological domain" description="Cytoplasmic" evidence="1">
    <location>
        <begin position="146"/>
        <end position="155"/>
    </location>
</feature>
<feature type="transmembrane region" description="Helical" evidence="1">
    <location>
        <begin position="156"/>
        <end position="175"/>
    </location>
</feature>
<feature type="topological domain" description="Periplasmic" evidence="1">
    <location>
        <begin position="176"/>
        <end position="196"/>
    </location>
</feature>
<feature type="transmembrane region" description="Helical" evidence="1">
    <location>
        <begin position="197"/>
        <end position="220"/>
    </location>
</feature>
<feature type="topological domain" description="Cytoplasmic" evidence="1">
    <location>
        <begin position="221"/>
        <end position="238"/>
    </location>
</feature>
<feature type="transmembrane region" description="Helical" evidence="1">
    <location>
        <begin position="239"/>
        <end position="258"/>
    </location>
</feature>
<feature type="topological domain" description="Periplasmic" evidence="1">
    <location>
        <begin position="259"/>
        <end position="276"/>
    </location>
</feature>
<feature type="transmembrane region" description="Helical" evidence="1">
    <location>
        <begin position="277"/>
        <end position="297"/>
    </location>
</feature>
<feature type="topological domain" description="Cytoplasmic" evidence="1">
    <location>
        <begin position="298"/>
        <end position="327"/>
    </location>
</feature>
<feature type="transmembrane region" description="Helical" evidence="1">
    <location>
        <begin position="328"/>
        <end position="344"/>
    </location>
</feature>
<feature type="topological domain" description="Periplasmic" evidence="1">
    <location>
        <begin position="345"/>
        <end position="350"/>
    </location>
</feature>
<feature type="transmembrane region" description="Helical" evidence="1">
    <location>
        <begin position="351"/>
        <end position="370"/>
    </location>
</feature>
<feature type="topological domain" description="Cytoplasmic" evidence="1">
    <location>
        <begin position="371"/>
        <end position="387"/>
    </location>
</feature>
<feature type="transmembrane region" description="Helical" evidence="1">
    <location>
        <begin position="388"/>
        <end position="406"/>
    </location>
</feature>
<feature type="topological domain" description="Periplasmic" evidence="1">
    <location>
        <begin position="407"/>
        <end position="412"/>
    </location>
</feature>
<evidence type="ECO:0000255" key="1">
    <source>
        <dbReference type="HAMAP-Rule" id="MF_00221"/>
    </source>
</evidence>
<sequence>MTNYRVESSSGRAARKTRLALMGPAFIAAIGYIDPGNFATNIQAGASFGYQLLWVVVWANLMAMLIQILSAKLGIATGKNLAEQIRDHYPRPVVWFYWVQAEIIAMATDLAEFIGAAIGFKLILGVSLLQGAVLTGIATFLILMLQRRGQKPLEKVIGGLLLFVAAAYIVELIFSQPNLAQLGKGMVIPSLPTSEAVFLAAGVLGATIMPHVIYLHSSLTQHLHGGSRQQRYSATKWDVAIAMTIAGFVNLAMMATAAAAFHFSGHTGVADLDEAYLTLQPLLSHAAATVFGLSLVAAGLSSTVVGTLAGQVVMQGFIRFHIPLWVRRTVTMLPSFIVILMGLDPTRILVMSQVLLSFGIALALVPLLIFTSDSKLMGDLVNSKRVKQTGWVIVVLVVALNIWLLVGTALGL</sequence>
<protein>
    <recommendedName>
        <fullName evidence="1">Divalent metal cation transporter MntH</fullName>
    </recommendedName>
</protein>
<name>MNTH_ECOHS</name>
<dbReference type="EMBL" id="CP000802">
    <property type="protein sequence ID" value="ABV06800.1"/>
    <property type="molecule type" value="Genomic_DNA"/>
</dbReference>
<dbReference type="RefSeq" id="WP_000186384.1">
    <property type="nucleotide sequence ID" value="NC_009800.1"/>
</dbReference>
<dbReference type="SMR" id="A8A2P6"/>
<dbReference type="KEGG" id="ecx:EcHS_A2529"/>
<dbReference type="HOGENOM" id="CLU_020088_2_0_6"/>
<dbReference type="GO" id="GO:0005886">
    <property type="term" value="C:plasma membrane"/>
    <property type="evidence" value="ECO:0007669"/>
    <property type="project" value="UniProtKB-SubCell"/>
</dbReference>
<dbReference type="GO" id="GO:0015086">
    <property type="term" value="F:cadmium ion transmembrane transporter activity"/>
    <property type="evidence" value="ECO:0007669"/>
    <property type="project" value="TreeGrafter"/>
</dbReference>
<dbReference type="GO" id="GO:0005384">
    <property type="term" value="F:manganese ion transmembrane transporter activity"/>
    <property type="evidence" value="ECO:0007669"/>
    <property type="project" value="TreeGrafter"/>
</dbReference>
<dbReference type="GO" id="GO:0046872">
    <property type="term" value="F:metal ion binding"/>
    <property type="evidence" value="ECO:0007669"/>
    <property type="project" value="UniProtKB-UniRule"/>
</dbReference>
<dbReference type="GO" id="GO:0015293">
    <property type="term" value="F:symporter activity"/>
    <property type="evidence" value="ECO:0007669"/>
    <property type="project" value="UniProtKB-UniRule"/>
</dbReference>
<dbReference type="GO" id="GO:0034755">
    <property type="term" value="P:iron ion transmembrane transport"/>
    <property type="evidence" value="ECO:0007669"/>
    <property type="project" value="TreeGrafter"/>
</dbReference>
<dbReference type="HAMAP" id="MF_00221">
    <property type="entry name" value="NRAMP"/>
    <property type="match status" value="1"/>
</dbReference>
<dbReference type="InterPro" id="IPR001046">
    <property type="entry name" value="NRAMP_fam"/>
</dbReference>
<dbReference type="NCBIfam" id="TIGR01197">
    <property type="entry name" value="nramp"/>
    <property type="match status" value="1"/>
</dbReference>
<dbReference type="NCBIfam" id="NF037982">
    <property type="entry name" value="Nramp_1"/>
    <property type="match status" value="1"/>
</dbReference>
<dbReference type="NCBIfam" id="NF001923">
    <property type="entry name" value="PRK00701.1"/>
    <property type="match status" value="1"/>
</dbReference>
<dbReference type="PANTHER" id="PTHR11706:SF33">
    <property type="entry name" value="NATURAL RESISTANCE-ASSOCIATED MACROPHAGE PROTEIN 2"/>
    <property type="match status" value="1"/>
</dbReference>
<dbReference type="PANTHER" id="PTHR11706">
    <property type="entry name" value="SOLUTE CARRIER PROTEIN FAMILY 11 MEMBER"/>
    <property type="match status" value="1"/>
</dbReference>
<dbReference type="Pfam" id="PF01566">
    <property type="entry name" value="Nramp"/>
    <property type="match status" value="1"/>
</dbReference>
<dbReference type="PRINTS" id="PR00447">
    <property type="entry name" value="NATRESASSCMP"/>
</dbReference>
<gene>
    <name evidence="1" type="primary">mntH</name>
    <name type="ordered locus">EcHS_A2529</name>
</gene>
<comment type="function">
    <text evidence="1">H(+)-stimulated, divalent metal cation uptake system.</text>
</comment>
<comment type="subcellular location">
    <subcellularLocation>
        <location evidence="1">Cell inner membrane</location>
        <topology evidence="1">Multi-pass membrane protein</topology>
    </subcellularLocation>
</comment>
<comment type="similarity">
    <text evidence="1">Belongs to the NRAMP family.</text>
</comment>
<accession>A8A2P6</accession>
<organism>
    <name type="scientific">Escherichia coli O9:H4 (strain HS)</name>
    <dbReference type="NCBI Taxonomy" id="331112"/>
    <lineage>
        <taxon>Bacteria</taxon>
        <taxon>Pseudomonadati</taxon>
        <taxon>Pseudomonadota</taxon>
        <taxon>Gammaproteobacteria</taxon>
        <taxon>Enterobacterales</taxon>
        <taxon>Enterobacteriaceae</taxon>
        <taxon>Escherichia</taxon>
    </lineage>
</organism>
<keyword id="KW-0997">Cell inner membrane</keyword>
<keyword id="KW-1003">Cell membrane</keyword>
<keyword id="KW-0406">Ion transport</keyword>
<keyword id="KW-0472">Membrane</keyword>
<keyword id="KW-0769">Symport</keyword>
<keyword id="KW-0812">Transmembrane</keyword>
<keyword id="KW-1133">Transmembrane helix</keyword>
<keyword id="KW-0813">Transport</keyword>
<reference key="1">
    <citation type="journal article" date="2008" name="J. Bacteriol.">
        <title>The pangenome structure of Escherichia coli: comparative genomic analysis of E. coli commensal and pathogenic isolates.</title>
        <authorList>
            <person name="Rasko D.A."/>
            <person name="Rosovitz M.J."/>
            <person name="Myers G.S.A."/>
            <person name="Mongodin E.F."/>
            <person name="Fricke W.F."/>
            <person name="Gajer P."/>
            <person name="Crabtree J."/>
            <person name="Sebaihia M."/>
            <person name="Thomson N.R."/>
            <person name="Chaudhuri R."/>
            <person name="Henderson I.R."/>
            <person name="Sperandio V."/>
            <person name="Ravel J."/>
        </authorList>
    </citation>
    <scope>NUCLEOTIDE SEQUENCE [LARGE SCALE GENOMIC DNA]</scope>
    <source>
        <strain>HS</strain>
    </source>
</reference>